<protein>
    <recommendedName>
        <fullName evidence="1">DNA mismatch repair protein MutL</fullName>
    </recommendedName>
</protein>
<accession>B3EL44</accession>
<organism>
    <name type="scientific">Chlorobium phaeobacteroides (strain BS1)</name>
    <dbReference type="NCBI Taxonomy" id="331678"/>
    <lineage>
        <taxon>Bacteria</taxon>
        <taxon>Pseudomonadati</taxon>
        <taxon>Chlorobiota</taxon>
        <taxon>Chlorobiia</taxon>
        <taxon>Chlorobiales</taxon>
        <taxon>Chlorobiaceae</taxon>
        <taxon>Chlorobium/Pelodictyon group</taxon>
        <taxon>Chlorobium</taxon>
    </lineage>
</organism>
<comment type="function">
    <text evidence="1">This protein is involved in the repair of mismatches in DNA. It is required for dam-dependent methyl-directed DNA mismatch repair. May act as a 'molecular matchmaker', a protein that promotes the formation of a stable complex between two or more DNA-binding proteins in an ATP-dependent manner without itself being part of a final effector complex.</text>
</comment>
<comment type="similarity">
    <text evidence="1">Belongs to the DNA mismatch repair MutL/HexB family.</text>
</comment>
<gene>
    <name evidence="1" type="primary">mutL</name>
    <name type="ordered locus">Cphamn1_0302</name>
</gene>
<sequence>MPRIARLPDIVANKISAGEVVQRPASVVKELLENAIDAGATRITVAIKDAGKELVQVIDNGSGMDEEDALRCVERFATSKISDAEELDALTTLGFRGEALASISTVSHFELRTRRENDNVGIQLRYEGGVLSERGKAASEPGTAVSVRNLFYNVPARRKFLKSNATEFKHIFESVKAQVLAYPEIQWQMINDDETLFDFRSSDMHERLNFFFGDDFAGSLIEVHDDNDFLSLHGYVGKPSMQKRQKNEQFIYLNRRVIQNRMLSQALQQAYGELLVERHSPFVLLFLGIDPQQTDVNVHPAKLEVKFEDERSVRTMFYTIIKRSVRMQDFSPDVGGEGFHETSDSFSSRSSQHSDARLGFQAVPSRASSTDDLYREFQESTPKRPMPDRTRVSEQEEMFSHSADIFCEPDREFRSSDFGQVSEEFVDGVRLEPEEKDPKIWQLHNKYIICQIKTGLMLIDQHVAHERVLYERAVDIMDNNVPNAQQLLFPQKVELKPWEFEIYLEICDDLDRLGFNLGTLGTRTVMIEGVPQDVRSGSEAYILQDMIQEYQQNASKLKLEKRENLAKSYSCRNAIMSGQALSLEDMRSLIDRLFATKMPYVCPHGRPVIIRISLDQLDRMFGRK</sequence>
<evidence type="ECO:0000255" key="1">
    <source>
        <dbReference type="HAMAP-Rule" id="MF_00149"/>
    </source>
</evidence>
<evidence type="ECO:0000256" key="2">
    <source>
        <dbReference type="SAM" id="MobiDB-lite"/>
    </source>
</evidence>
<reference key="1">
    <citation type="submission" date="2008-06" db="EMBL/GenBank/DDBJ databases">
        <title>Complete sequence of Chlorobium phaeobacteroides BS1.</title>
        <authorList>
            <consortium name="US DOE Joint Genome Institute"/>
            <person name="Lucas S."/>
            <person name="Copeland A."/>
            <person name="Lapidus A."/>
            <person name="Glavina del Rio T."/>
            <person name="Dalin E."/>
            <person name="Tice H."/>
            <person name="Bruce D."/>
            <person name="Goodwin L."/>
            <person name="Pitluck S."/>
            <person name="Schmutz J."/>
            <person name="Larimer F."/>
            <person name="Land M."/>
            <person name="Hauser L."/>
            <person name="Kyrpides N."/>
            <person name="Ovchinnikova G."/>
            <person name="Li T."/>
            <person name="Liu Z."/>
            <person name="Zhao F."/>
            <person name="Overmann J."/>
            <person name="Bryant D.A."/>
            <person name="Richardson P."/>
        </authorList>
    </citation>
    <scope>NUCLEOTIDE SEQUENCE [LARGE SCALE GENOMIC DNA]</scope>
    <source>
        <strain>BS1</strain>
    </source>
</reference>
<feature type="chain" id="PRO_1000096638" description="DNA mismatch repair protein MutL">
    <location>
        <begin position="1"/>
        <end position="624"/>
    </location>
</feature>
<feature type="region of interest" description="Disordered" evidence="2">
    <location>
        <begin position="336"/>
        <end position="357"/>
    </location>
</feature>
<feature type="compositionally biased region" description="Low complexity" evidence="2">
    <location>
        <begin position="344"/>
        <end position="353"/>
    </location>
</feature>
<keyword id="KW-0227">DNA damage</keyword>
<keyword id="KW-0234">DNA repair</keyword>
<name>MUTL_CHLPB</name>
<proteinExistence type="inferred from homology"/>
<dbReference type="EMBL" id="CP001101">
    <property type="protein sequence ID" value="ACE03271.1"/>
    <property type="molecule type" value="Genomic_DNA"/>
</dbReference>
<dbReference type="SMR" id="B3EL44"/>
<dbReference type="STRING" id="331678.Cphamn1_0302"/>
<dbReference type="KEGG" id="cpb:Cphamn1_0302"/>
<dbReference type="eggNOG" id="COG0323">
    <property type="taxonomic scope" value="Bacteria"/>
</dbReference>
<dbReference type="HOGENOM" id="CLU_004131_4_0_10"/>
<dbReference type="OrthoDB" id="9763467at2"/>
<dbReference type="GO" id="GO:0032300">
    <property type="term" value="C:mismatch repair complex"/>
    <property type="evidence" value="ECO:0007669"/>
    <property type="project" value="InterPro"/>
</dbReference>
<dbReference type="GO" id="GO:0005524">
    <property type="term" value="F:ATP binding"/>
    <property type="evidence" value="ECO:0007669"/>
    <property type="project" value="InterPro"/>
</dbReference>
<dbReference type="GO" id="GO:0016887">
    <property type="term" value="F:ATP hydrolysis activity"/>
    <property type="evidence" value="ECO:0007669"/>
    <property type="project" value="InterPro"/>
</dbReference>
<dbReference type="GO" id="GO:0140664">
    <property type="term" value="F:ATP-dependent DNA damage sensor activity"/>
    <property type="evidence" value="ECO:0007669"/>
    <property type="project" value="InterPro"/>
</dbReference>
<dbReference type="GO" id="GO:0030983">
    <property type="term" value="F:mismatched DNA binding"/>
    <property type="evidence" value="ECO:0007669"/>
    <property type="project" value="InterPro"/>
</dbReference>
<dbReference type="GO" id="GO:0006298">
    <property type="term" value="P:mismatch repair"/>
    <property type="evidence" value="ECO:0007669"/>
    <property type="project" value="UniProtKB-UniRule"/>
</dbReference>
<dbReference type="CDD" id="cd16926">
    <property type="entry name" value="HATPase_MutL-MLH-PMS-like"/>
    <property type="match status" value="1"/>
</dbReference>
<dbReference type="CDD" id="cd00782">
    <property type="entry name" value="MutL_Trans"/>
    <property type="match status" value="1"/>
</dbReference>
<dbReference type="FunFam" id="3.30.565.10:FF:000003">
    <property type="entry name" value="DNA mismatch repair endonuclease MutL"/>
    <property type="match status" value="1"/>
</dbReference>
<dbReference type="Gene3D" id="3.30.230.10">
    <property type="match status" value="1"/>
</dbReference>
<dbReference type="Gene3D" id="3.30.565.10">
    <property type="entry name" value="Histidine kinase-like ATPase, C-terminal domain"/>
    <property type="match status" value="1"/>
</dbReference>
<dbReference type="Gene3D" id="3.30.1540.20">
    <property type="entry name" value="MutL, C-terminal domain, dimerisation subdomain"/>
    <property type="match status" value="1"/>
</dbReference>
<dbReference type="Gene3D" id="3.30.1370.100">
    <property type="entry name" value="MutL, C-terminal domain, regulatory subdomain"/>
    <property type="match status" value="1"/>
</dbReference>
<dbReference type="HAMAP" id="MF_00149">
    <property type="entry name" value="DNA_mis_repair"/>
    <property type="match status" value="1"/>
</dbReference>
<dbReference type="InterPro" id="IPR014762">
    <property type="entry name" value="DNA_mismatch_repair_CS"/>
</dbReference>
<dbReference type="InterPro" id="IPR020667">
    <property type="entry name" value="DNA_mismatch_repair_MutL"/>
</dbReference>
<dbReference type="InterPro" id="IPR013507">
    <property type="entry name" value="DNA_mismatch_S5_2-like"/>
</dbReference>
<dbReference type="InterPro" id="IPR036890">
    <property type="entry name" value="HATPase_C_sf"/>
</dbReference>
<dbReference type="InterPro" id="IPR002099">
    <property type="entry name" value="MutL/Mlh/PMS"/>
</dbReference>
<dbReference type="InterPro" id="IPR038973">
    <property type="entry name" value="MutL/Mlh/Pms-like"/>
</dbReference>
<dbReference type="InterPro" id="IPR014790">
    <property type="entry name" value="MutL_C"/>
</dbReference>
<dbReference type="InterPro" id="IPR042120">
    <property type="entry name" value="MutL_C_dimsub"/>
</dbReference>
<dbReference type="InterPro" id="IPR042121">
    <property type="entry name" value="MutL_C_regsub"/>
</dbReference>
<dbReference type="InterPro" id="IPR037198">
    <property type="entry name" value="MutL_C_sf"/>
</dbReference>
<dbReference type="InterPro" id="IPR020568">
    <property type="entry name" value="Ribosomal_Su5_D2-typ_SF"/>
</dbReference>
<dbReference type="InterPro" id="IPR014721">
    <property type="entry name" value="Ribsml_uS5_D2-typ_fold_subgr"/>
</dbReference>
<dbReference type="NCBIfam" id="TIGR00585">
    <property type="entry name" value="mutl"/>
    <property type="match status" value="1"/>
</dbReference>
<dbReference type="PANTHER" id="PTHR10073">
    <property type="entry name" value="DNA MISMATCH REPAIR PROTEIN MLH, PMS, MUTL"/>
    <property type="match status" value="1"/>
</dbReference>
<dbReference type="PANTHER" id="PTHR10073:SF12">
    <property type="entry name" value="DNA MISMATCH REPAIR PROTEIN MLH1"/>
    <property type="match status" value="1"/>
</dbReference>
<dbReference type="Pfam" id="PF01119">
    <property type="entry name" value="DNA_mis_repair"/>
    <property type="match status" value="1"/>
</dbReference>
<dbReference type="Pfam" id="PF13589">
    <property type="entry name" value="HATPase_c_3"/>
    <property type="match status" value="1"/>
</dbReference>
<dbReference type="Pfam" id="PF08676">
    <property type="entry name" value="MutL_C"/>
    <property type="match status" value="1"/>
</dbReference>
<dbReference type="SMART" id="SM01340">
    <property type="entry name" value="DNA_mis_repair"/>
    <property type="match status" value="1"/>
</dbReference>
<dbReference type="SMART" id="SM00853">
    <property type="entry name" value="MutL_C"/>
    <property type="match status" value="1"/>
</dbReference>
<dbReference type="SUPFAM" id="SSF55874">
    <property type="entry name" value="ATPase domain of HSP90 chaperone/DNA topoisomerase II/histidine kinase"/>
    <property type="match status" value="1"/>
</dbReference>
<dbReference type="SUPFAM" id="SSF118116">
    <property type="entry name" value="DNA mismatch repair protein MutL"/>
    <property type="match status" value="1"/>
</dbReference>
<dbReference type="SUPFAM" id="SSF54211">
    <property type="entry name" value="Ribosomal protein S5 domain 2-like"/>
    <property type="match status" value="1"/>
</dbReference>
<dbReference type="PROSITE" id="PS00058">
    <property type="entry name" value="DNA_MISMATCH_REPAIR_1"/>
    <property type="match status" value="1"/>
</dbReference>